<dbReference type="EMBL" id="AY940210">
    <property type="protein sequence ID" value="AAX37266.1"/>
    <property type="molecule type" value="mRNA"/>
</dbReference>
<dbReference type="SMR" id="Q58L90"/>
<dbReference type="GO" id="GO:0005576">
    <property type="term" value="C:extracellular region"/>
    <property type="evidence" value="ECO:0000250"/>
    <property type="project" value="UniProtKB"/>
</dbReference>
<dbReference type="GO" id="GO:0005886">
    <property type="term" value="C:plasma membrane"/>
    <property type="evidence" value="ECO:0007669"/>
    <property type="project" value="TreeGrafter"/>
</dbReference>
<dbReference type="GO" id="GO:0032991">
    <property type="term" value="C:protein-containing complex"/>
    <property type="evidence" value="ECO:0000250"/>
    <property type="project" value="UniProtKB"/>
</dbReference>
<dbReference type="GO" id="GO:0005507">
    <property type="term" value="F:copper ion binding"/>
    <property type="evidence" value="ECO:0007669"/>
    <property type="project" value="InterPro"/>
</dbReference>
<dbReference type="GO" id="GO:0016504">
    <property type="term" value="F:peptidase activator activity"/>
    <property type="evidence" value="ECO:0007669"/>
    <property type="project" value="UniProtKB-KW"/>
</dbReference>
<dbReference type="GO" id="GO:0038023">
    <property type="term" value="F:signaling receptor activity"/>
    <property type="evidence" value="ECO:0007669"/>
    <property type="project" value="TreeGrafter"/>
</dbReference>
<dbReference type="GO" id="GO:0090729">
    <property type="term" value="F:toxin activity"/>
    <property type="evidence" value="ECO:0007669"/>
    <property type="project" value="UniProtKB-KW"/>
</dbReference>
<dbReference type="GO" id="GO:0044469">
    <property type="term" value="P:venom-mediated blood coagulation"/>
    <property type="evidence" value="ECO:0000250"/>
    <property type="project" value="UniProtKB"/>
</dbReference>
<dbReference type="CDD" id="cd04226">
    <property type="entry name" value="CuRO_1_FV_like"/>
    <property type="match status" value="1"/>
</dbReference>
<dbReference type="CDD" id="cd14453">
    <property type="entry name" value="CuRO_2_FV_like"/>
    <property type="match status" value="1"/>
</dbReference>
<dbReference type="CDD" id="cd14450">
    <property type="entry name" value="CuRO_3_FV_like"/>
    <property type="match status" value="1"/>
</dbReference>
<dbReference type="CDD" id="cd14454">
    <property type="entry name" value="CuRO_4_FV_like"/>
    <property type="match status" value="1"/>
</dbReference>
<dbReference type="CDD" id="cd00057">
    <property type="entry name" value="FA58C"/>
    <property type="match status" value="2"/>
</dbReference>
<dbReference type="FunFam" id="2.60.40.420:FF:000056">
    <property type="entry name" value="Coagulation factor V"/>
    <property type="match status" value="1"/>
</dbReference>
<dbReference type="FunFam" id="2.60.40.420:FF:000050">
    <property type="entry name" value="coagulation factor V isoform X1"/>
    <property type="match status" value="1"/>
</dbReference>
<dbReference type="FunFam" id="2.60.40.420:FF:000068">
    <property type="entry name" value="coagulation factor V isoform X1"/>
    <property type="match status" value="1"/>
</dbReference>
<dbReference type="FunFam" id="2.60.120.260:FF:000002">
    <property type="entry name" value="Coagulation factor VIII"/>
    <property type="match status" value="2"/>
</dbReference>
<dbReference type="FunFam" id="2.60.40.420:FF:000011">
    <property type="entry name" value="Coagulation factor VIII (Predicted)"/>
    <property type="match status" value="2"/>
</dbReference>
<dbReference type="Gene3D" id="2.60.40.420">
    <property type="entry name" value="Cupredoxins - blue copper proteins"/>
    <property type="match status" value="5"/>
</dbReference>
<dbReference type="Gene3D" id="2.60.120.260">
    <property type="entry name" value="Galactose-binding domain-like"/>
    <property type="match status" value="2"/>
</dbReference>
<dbReference type="InterPro" id="IPR011707">
    <property type="entry name" value="Cu-oxidase-like_N"/>
</dbReference>
<dbReference type="InterPro" id="IPR033138">
    <property type="entry name" value="Cu_oxidase_CS"/>
</dbReference>
<dbReference type="InterPro" id="IPR008972">
    <property type="entry name" value="Cupredoxin"/>
</dbReference>
<dbReference type="InterPro" id="IPR000421">
    <property type="entry name" value="FA58C"/>
</dbReference>
<dbReference type="InterPro" id="IPR024715">
    <property type="entry name" value="Factor_5/8-like"/>
</dbReference>
<dbReference type="InterPro" id="IPR008979">
    <property type="entry name" value="Galactose-bd-like_sf"/>
</dbReference>
<dbReference type="InterPro" id="IPR050633">
    <property type="entry name" value="Neuropilin_MCO_CoagFactor"/>
</dbReference>
<dbReference type="PANTHER" id="PTHR46806:SF10">
    <property type="entry name" value="COAGULATION FACTOR V"/>
    <property type="match status" value="1"/>
</dbReference>
<dbReference type="PANTHER" id="PTHR46806">
    <property type="entry name" value="F5/8 TYPE C DOMAIN-CONTAINING PROTEIN"/>
    <property type="match status" value="1"/>
</dbReference>
<dbReference type="Pfam" id="PF07732">
    <property type="entry name" value="Cu-oxidase_3"/>
    <property type="match status" value="3"/>
</dbReference>
<dbReference type="Pfam" id="PF00754">
    <property type="entry name" value="F5_F8_type_C"/>
    <property type="match status" value="2"/>
</dbReference>
<dbReference type="PIRSF" id="PIRSF000354">
    <property type="entry name" value="Factors_V_VIII"/>
    <property type="match status" value="1"/>
</dbReference>
<dbReference type="SMART" id="SM00231">
    <property type="entry name" value="FA58C"/>
    <property type="match status" value="2"/>
</dbReference>
<dbReference type="SUPFAM" id="SSF49503">
    <property type="entry name" value="Cupredoxins"/>
    <property type="match status" value="6"/>
</dbReference>
<dbReference type="SUPFAM" id="SSF49785">
    <property type="entry name" value="Galactose-binding domain-like"/>
    <property type="match status" value="2"/>
</dbReference>
<dbReference type="PROSITE" id="PS01285">
    <property type="entry name" value="FA58C_1"/>
    <property type="match status" value="2"/>
</dbReference>
<dbReference type="PROSITE" id="PS01286">
    <property type="entry name" value="FA58C_2"/>
    <property type="match status" value="1"/>
</dbReference>
<dbReference type="PROSITE" id="PS50022">
    <property type="entry name" value="FA58C_3"/>
    <property type="match status" value="2"/>
</dbReference>
<dbReference type="PROSITE" id="PS00079">
    <property type="entry name" value="MULTICOPPER_OXIDASE1"/>
    <property type="match status" value="3"/>
</dbReference>
<name>FA5V_OXYMI</name>
<accession>Q58L90</accession>
<proteinExistence type="evidence at transcript level"/>
<reference key="1">
    <citation type="journal article" date="2005" name="Mol. Biol. Evol.">
        <title>Comparative analysis of prothrombin activators from the venom of Australian elapids.</title>
        <authorList>
            <person name="St Pierre L."/>
            <person name="Masci P.P."/>
            <person name="Filippovich I."/>
            <person name="Sorokina N."/>
            <person name="Marsh N."/>
            <person name="Miller D.J."/>
            <person name="Lavin M.F."/>
        </authorList>
    </citation>
    <scope>NUCLEOTIDE SEQUENCE [MRNA]</scope>
    <source>
        <tissue>Venom gland</tissue>
    </source>
</reference>
<reference key="2">
    <citation type="journal article" date="2001" name="Thromb. Haemost.">
        <title>Classification and nomenclature of prothrombin activators isolated from snake venoms.</title>
        <authorList>
            <person name="Manjunatha Kini R."/>
            <person name="Morita T."/>
            <person name="Rosing J."/>
        </authorList>
    </citation>
    <scope>NOMENCLATURE</scope>
</reference>
<evidence type="ECO:0000250" key="1"/>
<evidence type="ECO:0000250" key="2">
    <source>
        <dbReference type="UniProtKB" id="Q7SZN0"/>
    </source>
</evidence>
<evidence type="ECO:0000255" key="3">
    <source>
        <dbReference type="PROSITE-ProRule" id="PRU00081"/>
    </source>
</evidence>
<evidence type="ECO:0000255" key="4">
    <source>
        <dbReference type="PROSITE-ProRule" id="PRU00498"/>
    </source>
</evidence>
<evidence type="ECO:0000256" key="5">
    <source>
        <dbReference type="SAM" id="MobiDB-lite"/>
    </source>
</evidence>
<evidence type="ECO:0000305" key="6"/>
<keyword id="KW-1204">Blood coagulation cascade activating toxin</keyword>
<keyword id="KW-0106">Calcium</keyword>
<keyword id="KW-1015">Disulfide bond</keyword>
<keyword id="KW-0325">Glycoprotein</keyword>
<keyword id="KW-1199">Hemostasis impairing toxin</keyword>
<keyword id="KW-0479">Metal-binding</keyword>
<keyword id="KW-0655">Prothrombin activator</keyword>
<keyword id="KW-0677">Repeat</keyword>
<keyword id="KW-0964">Secreted</keyword>
<keyword id="KW-0732">Signal</keyword>
<keyword id="KW-0800">Toxin</keyword>
<protein>
    <recommendedName>
        <fullName>Venom prothrombin activator omicarin-C non-catalytic subunit</fullName>
        <shortName>vPA</shortName>
    </recommendedName>
    <alternativeName>
        <fullName>Venom coagulation factor Va-like protein</fullName>
    </alternativeName>
    <component>
        <recommendedName>
            <fullName>Omicarin-C non-catalytic subunit heavy chain</fullName>
        </recommendedName>
    </component>
    <component>
        <recommendedName>
            <fullName>Omicarin-C non-catalytic subunit light chain</fullName>
        </recommendedName>
    </component>
</protein>
<comment type="function">
    <text evidence="2">Snake prothrombin activator that attacks the hemostatic system of prey. This non-catalytic subunit is functionally similar to blood coagulation factor V. It serves as a critical cofactor for the prothrombinase activity of the catalytic subunit, which is similar to the blood coagulation factor X. The complex converts prothrombin to thrombin by sequential cleavage at two positions, Arg-320 followed by Arg-271. Cleavage at Arg-320 produces an active intermediate known as meizothrombin. Meizothrombin is the 'second' substrate for prothrombinase, and it docks in an altered manner to present the second cleavage site (271). Cleavage at Arg-271 releases active thrombin from its pro-fragment. This order of events is reversed if the protease component of prothrombinase is used on its own, suggesting that the 271 site is inherently more accessible to proteolysis.</text>
</comment>
<comment type="subunit">
    <text evidence="1">Heterodimer of a light and a heavy chains; non-disulfide-linked. The interaction between the two chains is calcium-dependent. Found in its active form associated with omicarin-C catalytic subunit (AC Q58L95) (By similarity).</text>
</comment>
<comment type="subcellular location">
    <subcellularLocation>
        <location evidence="1">Secreted</location>
    </subcellularLocation>
</comment>
<comment type="tissue specificity">
    <text>Expressed by the venom gland.</text>
</comment>
<comment type="PTM">
    <text evidence="1">In physiological conditions, blood coagulation factor V and factor Va are inactivated by activated protein C (APC) through proteolytic degradation of the heavy chain. However, omicarin-C non-catalytic subunit (factor V-like protein) retains its full activity even at high concentration of APC. This has two explanations: this protein has only one of the three cleavage sites present in factor V that are targeted by the APC for inactivation, and the binding with the catalytic subunit protect the cleavage site from inactivation (By similarity).</text>
</comment>
<comment type="miscellaneous">
    <text>In contrast to blood coagulation factors that circulate as inactive zymogen in plasma, venom prothrombin activators are always found in the active form in the venom. Hence, catalytic and non-catalytic subunits are found naturally in venom as stable complexes.</text>
</comment>
<comment type="similarity">
    <text evidence="6">Belongs to the multicopper oxidase family.</text>
</comment>
<organism>
    <name type="scientific">Oxyuranus microlepidotus</name>
    <name type="common">Inland taipan</name>
    <name type="synonym">Diemenia microlepidota</name>
    <dbReference type="NCBI Taxonomy" id="111177"/>
    <lineage>
        <taxon>Eukaryota</taxon>
        <taxon>Metazoa</taxon>
        <taxon>Chordata</taxon>
        <taxon>Craniata</taxon>
        <taxon>Vertebrata</taxon>
        <taxon>Euteleostomi</taxon>
        <taxon>Lepidosauria</taxon>
        <taxon>Squamata</taxon>
        <taxon>Bifurcata</taxon>
        <taxon>Unidentata</taxon>
        <taxon>Episquamata</taxon>
        <taxon>Toxicofera</taxon>
        <taxon>Serpentes</taxon>
        <taxon>Colubroidea</taxon>
        <taxon>Elapidae</taxon>
        <taxon>Hydrophiinae</taxon>
        <taxon>Oxyuranus</taxon>
    </lineage>
</organism>
<sequence length="1460" mass="166082">MGRYSVSPVPKCLLLMFLGWSGLKYYQVNAAQLREYRIAAQLEDWDYNPQPEELSRLSESELTFKKIVYREYELDFKQEKPRDELSGLLGPTLRGEVGDILIIYFKNFATQPVSIHPQSAVYNKWSEGSSYSDGTSDVERLDDAVPPGQSFKYVWNITAEIGPKKADPPCLTYAYYSHVNMVRDFNSGLIGALLICKEGSLNANGAQKFFNREYVLMFSVFDESKNWYRKPSLQYTINGFANGTLPDVQACAYDHISWHLIGMSSSPEIFSVHFNGQTLEQNHYKVSTINLVGGASVTANMSVSRTGKWLISSLVAKHLQAGMYGYLNIKDCGHPNTLTRKLSFRELRRIMNWEYFIAAEEITWDYAPEIPSSVDRRYKAQYLDNFSNFIGKKYKKAVFRQYEDGNFTKPTYAIWPKERGILGPVIKAKVRDTVTIVFKNLASRPYSIYVHGVSVSKDAEGAIYPSDPKENITHGKAVEPGQVYTYKWTVLDTDEPTVKDSECITKLYHSAVDMTRDIASGLIGPLLVCKLKALSVKGVQNKADVEQHAVFAVFDENKSWYLEDNIKKYCSNPSSVKKDDPKFYKSNVMYTLNGYASDRTEVLGFHQSEVVQWHLTSVGTVDEIVPVHLSGHTFLSKGKHQDILNLFPMSGESATVTMDNLGTWLLSSWGSCEMSNGMRLRFLDANYDDEDEGNEEEEEDDGDIFADIFSPPEVVKKKEEVPVNFVPDPESDALAKELGLLDDEDNPEQSRSEQTEDDEEQLMIASVLGLRSFKGSVAEEELKHTALALEEDAHASDPRIDSNSARNSDDIAGRYLRTINRRNKRRYYIAAEEVLWDYSPIGKSQVRSLPAKTTFKKAIFRSYLDDTFQTPSTGGEYEKHLGILGPIIRAEVDDVIEVQFRNLASRPYSLHAHGLLYEKSSEGRSYDDNSPELFKKDDAIMPNGTYTYVWQVPPRSGPTDNTEKCKSWAYYSGVNPEKDIHSGLIGPILICQKGMIDKYNRTIDIREFVLFFMVFDEEKSWYFPKSDKSTCEEKLIGVQSSHHTFPAINGIPYQLQGLMMYKDENVHWHLLNMGGPKDIHVVNFHGQTFTEEGREDNQLGVLPLLPGTFASIKMKPSKIGTWLLETEVGENQERGMQALFTVIDKDCKLPMGLASGIIQDSQISASGHVEYWEPKLARLNNTGMFNAWSIIKKEHEHPWIQIDLQRQVVITGIQTQGTVQLLKHSYTVEYFVTYSKDGQNWITFKGRHSETQMHFEGNSDGTTVKENHIDPPIIARYIRLHPTKFYNTPTFRIELLGCEVEGCSVPLGMESGAIKNSEITASSYKKTWWSSWEPFLARLNLEGGTNAWQPEVNNKDQWLQIDLQHLTKITSIITQGATSMTTAMYVKTFSIHYTDDNSTWKPYLDVRTSMEKVFTGNINSDGHVKHFFKPPILSRFIRIIPKTWNQYIALRIELFGCEVF</sequence>
<feature type="signal peptide" evidence="1">
    <location>
        <begin position="1"/>
        <end position="30"/>
    </location>
</feature>
<feature type="chain" id="PRO_0000409904" description="Omicarin-C non-catalytic subunit heavy chain">
    <location>
        <begin position="31"/>
        <end position="771"/>
    </location>
</feature>
<feature type="propeptide" id="PRO_0000409905" description="Activation peptide (connecting region)" evidence="1">
    <location>
        <begin position="772"/>
        <end position="817"/>
    </location>
</feature>
<feature type="chain" id="PRO_0000409906" description="Omicarin-C non-catalytic subunit light chain">
    <location>
        <begin position="818"/>
        <end position="1460"/>
    </location>
</feature>
<feature type="domain" description="F5/8 type A 1">
    <location>
        <begin position="32"/>
        <end position="330"/>
    </location>
</feature>
<feature type="domain" description="Plastocyanin-like 1">
    <location>
        <begin position="32"/>
        <end position="196"/>
    </location>
</feature>
<feature type="domain" description="Plastocyanin-like 2">
    <location>
        <begin position="206"/>
        <end position="330"/>
    </location>
</feature>
<feature type="domain" description="F5/8 type A 2">
    <location>
        <begin position="350"/>
        <end position="685"/>
    </location>
</feature>
<feature type="domain" description="Plastocyanin-like 3">
    <location>
        <begin position="351"/>
        <end position="529"/>
    </location>
</feature>
<feature type="domain" description="Plastocyanin-like 4">
    <location>
        <begin position="539"/>
        <end position="685"/>
    </location>
</feature>
<feature type="domain" description="F5/8 type A 3">
    <location>
        <begin position="823"/>
        <end position="1143"/>
    </location>
</feature>
<feature type="domain" description="Plastocyanin-like 5">
    <location>
        <begin position="823"/>
        <end position="991"/>
    </location>
</feature>
<feature type="domain" description="Plastocyanin-like 6">
    <location>
        <begin position="1000"/>
        <end position="1143"/>
    </location>
</feature>
<feature type="domain" description="F5/8 type C 1" evidence="3">
    <location>
        <begin position="1147"/>
        <end position="1298"/>
    </location>
</feature>
<feature type="domain" description="F5/8 type C 2" evidence="3">
    <location>
        <begin position="1303"/>
        <end position="1457"/>
    </location>
</feature>
<feature type="region of interest" description="B">
    <location>
        <begin position="693"/>
        <end position="817"/>
    </location>
</feature>
<feature type="region of interest" description="Disordered" evidence="5">
    <location>
        <begin position="740"/>
        <end position="760"/>
    </location>
</feature>
<feature type="binding site" evidence="2">
    <location>
        <position position="124"/>
    </location>
    <ligand>
        <name>Ca(2+)</name>
        <dbReference type="ChEBI" id="CHEBI:29108"/>
        <label>1</label>
    </ligand>
</feature>
<feature type="binding site" evidence="2">
    <location>
        <position position="139"/>
    </location>
    <ligand>
        <name>Ca(2+)</name>
        <dbReference type="ChEBI" id="CHEBI:29108"/>
        <label>1</label>
    </ligand>
</feature>
<feature type="binding site" evidence="2">
    <location>
        <position position="142"/>
    </location>
    <ligand>
        <name>Ca(2+)</name>
        <dbReference type="ChEBI" id="CHEBI:29108"/>
        <label>1</label>
    </ligand>
</feature>
<feature type="binding site" evidence="2">
    <location>
        <position position="143"/>
    </location>
    <ligand>
        <name>Ca(2+)</name>
        <dbReference type="ChEBI" id="CHEBI:29108"/>
        <label>1</label>
    </ligand>
</feature>
<feature type="binding site" evidence="2">
    <location>
        <position position="919"/>
    </location>
    <ligand>
        <name>Ca(2+)</name>
        <dbReference type="ChEBI" id="CHEBI:29108"/>
        <label>2</label>
    </ligand>
</feature>
<feature type="binding site" evidence="2">
    <location>
        <position position="934"/>
    </location>
    <ligand>
        <name>Ca(2+)</name>
        <dbReference type="ChEBI" id="CHEBI:29108"/>
        <label>2</label>
    </ligand>
</feature>
<feature type="binding site" evidence="2">
    <location>
        <position position="937"/>
    </location>
    <ligand>
        <name>Ca(2+)</name>
        <dbReference type="ChEBI" id="CHEBI:29108"/>
        <label>2</label>
    </ligand>
</feature>
<feature type="binding site" evidence="2">
    <location>
        <position position="938"/>
    </location>
    <ligand>
        <name>Ca(2+)</name>
        <dbReference type="ChEBI" id="CHEBI:29108"/>
        <label>2</label>
    </ligand>
</feature>
<feature type="site" description="Cleavage; by thrombin" evidence="1">
    <location>
        <begin position="771"/>
        <end position="772"/>
    </location>
</feature>
<feature type="site" description="Cleavage; by thrombin" evidence="1">
    <location>
        <begin position="817"/>
        <end position="818"/>
    </location>
</feature>
<feature type="glycosylation site" description="N-linked (GlcNAc...) asparagine" evidence="4">
    <location>
        <position position="156"/>
    </location>
</feature>
<feature type="glycosylation site" description="N-linked (GlcNAc...) asparagine" evidence="4">
    <location>
        <position position="242"/>
    </location>
</feature>
<feature type="glycosylation site" description="N-linked (GlcNAc...) asparagine" evidence="4">
    <location>
        <position position="300"/>
    </location>
</feature>
<feature type="glycosylation site" description="N-linked (GlcNAc...) asparagine" evidence="4">
    <location>
        <position position="385"/>
    </location>
</feature>
<feature type="glycosylation site" description="N-linked (GlcNAc...) asparagine" evidence="4">
    <location>
        <position position="406"/>
    </location>
</feature>
<feature type="glycosylation site" description="N-linked (GlcNAc...) asparagine" evidence="4">
    <location>
        <position position="471"/>
    </location>
</feature>
<feature type="glycosylation site" description="N-linked (GlcNAc...) asparagine" evidence="4">
    <location>
        <position position="557"/>
    </location>
</feature>
<feature type="glycosylation site" description="N-linked (GlcNAc...) asparagine" evidence="4">
    <location>
        <position position="943"/>
    </location>
</feature>
<feature type="glycosylation site" description="N-linked (GlcNAc...) asparagine" evidence="4">
    <location>
        <position position="1000"/>
    </location>
</feature>
<feature type="glycosylation site" description="N-linked (GlcNAc...) asparagine" evidence="4">
    <location>
        <position position="1180"/>
    </location>
</feature>
<feature type="glycosylation site" description="N-linked (GlcNAc...) asparagine" evidence="4">
    <location>
        <position position="1397"/>
    </location>
</feature>
<feature type="disulfide bond" evidence="2">
    <location>
        <begin position="170"/>
        <end position="196"/>
    </location>
</feature>
<feature type="disulfide bond" evidence="2">
    <location>
        <begin position="251"/>
        <end position="332"/>
    </location>
</feature>
<feature type="disulfide bond" evidence="2">
    <location>
        <begin position="503"/>
        <end position="529"/>
    </location>
</feature>
<feature type="disulfide bond" evidence="2">
    <location>
        <begin position="672"/>
        <end position="1031"/>
    </location>
</feature>
<feature type="disulfide bond" evidence="2">
    <location>
        <begin position="965"/>
        <end position="991"/>
    </location>
</feature>
<feature type="disulfide bond" evidence="2">
    <location>
        <begin position="1147"/>
        <end position="1298"/>
    </location>
</feature>
<feature type="disulfide bond" evidence="2">
    <location>
        <begin position="1303"/>
        <end position="1457"/>
    </location>
</feature>